<gene>
    <name evidence="1" type="primary">glsA</name>
    <name type="ordered locus">CV_4158</name>
</gene>
<organism>
    <name type="scientific">Chromobacterium violaceum (strain ATCC 12472 / DSM 30191 / JCM 1249 / CCUG 213 / NBRC 12614 / NCIMB 9131 / NCTC 9757 / MK)</name>
    <dbReference type="NCBI Taxonomy" id="243365"/>
    <lineage>
        <taxon>Bacteria</taxon>
        <taxon>Pseudomonadati</taxon>
        <taxon>Pseudomonadota</taxon>
        <taxon>Betaproteobacteria</taxon>
        <taxon>Neisseriales</taxon>
        <taxon>Chromobacteriaceae</taxon>
        <taxon>Chromobacterium</taxon>
    </lineage>
</organism>
<feature type="chain" id="PRO_0000110601" description="Glutaminase">
    <location>
        <begin position="1"/>
        <end position="304"/>
    </location>
</feature>
<feature type="binding site" evidence="1">
    <location>
        <position position="63"/>
    </location>
    <ligand>
        <name>substrate</name>
    </ligand>
</feature>
<feature type="binding site" evidence="1">
    <location>
        <position position="113"/>
    </location>
    <ligand>
        <name>substrate</name>
    </ligand>
</feature>
<feature type="binding site" evidence="1">
    <location>
        <position position="157"/>
    </location>
    <ligand>
        <name>substrate</name>
    </ligand>
</feature>
<feature type="binding site" evidence="1">
    <location>
        <position position="164"/>
    </location>
    <ligand>
        <name>substrate</name>
    </ligand>
</feature>
<feature type="binding site" evidence="1">
    <location>
        <position position="188"/>
    </location>
    <ligand>
        <name>substrate</name>
    </ligand>
</feature>
<feature type="binding site" evidence="1">
    <location>
        <position position="240"/>
    </location>
    <ligand>
        <name>substrate</name>
    </ligand>
</feature>
<feature type="binding site" evidence="1">
    <location>
        <position position="258"/>
    </location>
    <ligand>
        <name>substrate</name>
    </ligand>
</feature>
<protein>
    <recommendedName>
        <fullName evidence="1">Glutaminase</fullName>
        <ecNumber evidence="1">3.5.1.2</ecNumber>
    </recommendedName>
</protein>
<keyword id="KW-0378">Hydrolase</keyword>
<keyword id="KW-1185">Reference proteome</keyword>
<evidence type="ECO:0000255" key="1">
    <source>
        <dbReference type="HAMAP-Rule" id="MF_00313"/>
    </source>
</evidence>
<accession>Q7NQH9</accession>
<sequence length="304" mass="32747">MNLQALIEDIRQQVLPFYDQGRVADYIPALASVPPHQFGIAIHTLDGREHACGDADTPFSIQSISKAFMLALTLQADGEQLWRHVGKEPSGNPFNSLVQLEYEHGIPRNPFINAGALVVTDRAIGHFGDAHARLLAWLREETGNAGLMADQAIAASERAHGDRNAALAHFMKSYGNLGHPVETVLDQYFHNCSIAMSCRELARAGLFLANHGLSPQTGTQYLSRSQAKQVNAVMLTCGTYDAAGEFAYRVGLPVKSGVGGGLLAVIPGKMAIAAWSPQLDARGNSVLGLEALDRFTTRTGLSIF</sequence>
<name>GLSA_CHRVO</name>
<comment type="catalytic activity">
    <reaction evidence="1">
        <text>L-glutamine + H2O = L-glutamate + NH4(+)</text>
        <dbReference type="Rhea" id="RHEA:15889"/>
        <dbReference type="ChEBI" id="CHEBI:15377"/>
        <dbReference type="ChEBI" id="CHEBI:28938"/>
        <dbReference type="ChEBI" id="CHEBI:29985"/>
        <dbReference type="ChEBI" id="CHEBI:58359"/>
        <dbReference type="EC" id="3.5.1.2"/>
    </reaction>
</comment>
<comment type="subunit">
    <text evidence="1">Homotetramer.</text>
</comment>
<comment type="similarity">
    <text evidence="1">Belongs to the glutaminase family.</text>
</comment>
<proteinExistence type="inferred from homology"/>
<dbReference type="EC" id="3.5.1.2" evidence="1"/>
<dbReference type="EMBL" id="AE016825">
    <property type="protein sequence ID" value="AAQ61819.1"/>
    <property type="molecule type" value="Genomic_DNA"/>
</dbReference>
<dbReference type="RefSeq" id="WP_011137705.1">
    <property type="nucleotide sequence ID" value="NC_005085.1"/>
</dbReference>
<dbReference type="SMR" id="Q7NQH9"/>
<dbReference type="STRING" id="243365.CV_4158"/>
<dbReference type="KEGG" id="cvi:CV_4158"/>
<dbReference type="eggNOG" id="COG2066">
    <property type="taxonomic scope" value="Bacteria"/>
</dbReference>
<dbReference type="HOGENOM" id="CLU_027932_1_1_4"/>
<dbReference type="OrthoDB" id="9788822at2"/>
<dbReference type="Proteomes" id="UP000001424">
    <property type="component" value="Chromosome"/>
</dbReference>
<dbReference type="GO" id="GO:0004359">
    <property type="term" value="F:glutaminase activity"/>
    <property type="evidence" value="ECO:0007669"/>
    <property type="project" value="UniProtKB-UniRule"/>
</dbReference>
<dbReference type="GO" id="GO:0006537">
    <property type="term" value="P:glutamate biosynthetic process"/>
    <property type="evidence" value="ECO:0007669"/>
    <property type="project" value="TreeGrafter"/>
</dbReference>
<dbReference type="GO" id="GO:0006543">
    <property type="term" value="P:glutamine catabolic process"/>
    <property type="evidence" value="ECO:0007669"/>
    <property type="project" value="TreeGrafter"/>
</dbReference>
<dbReference type="FunFam" id="3.40.710.10:FF:000005">
    <property type="entry name" value="Glutaminase"/>
    <property type="match status" value="1"/>
</dbReference>
<dbReference type="Gene3D" id="3.40.710.10">
    <property type="entry name" value="DD-peptidase/beta-lactamase superfamily"/>
    <property type="match status" value="1"/>
</dbReference>
<dbReference type="HAMAP" id="MF_00313">
    <property type="entry name" value="Glutaminase"/>
    <property type="match status" value="1"/>
</dbReference>
<dbReference type="InterPro" id="IPR012338">
    <property type="entry name" value="Beta-lactam/transpept-like"/>
</dbReference>
<dbReference type="InterPro" id="IPR015868">
    <property type="entry name" value="Glutaminase"/>
</dbReference>
<dbReference type="NCBIfam" id="TIGR03814">
    <property type="entry name" value="Gln_ase"/>
    <property type="match status" value="1"/>
</dbReference>
<dbReference type="NCBIfam" id="NF002132">
    <property type="entry name" value="PRK00971.1-1"/>
    <property type="match status" value="1"/>
</dbReference>
<dbReference type="NCBIfam" id="NF002133">
    <property type="entry name" value="PRK00971.1-2"/>
    <property type="match status" value="1"/>
</dbReference>
<dbReference type="PANTHER" id="PTHR12544">
    <property type="entry name" value="GLUTAMINASE"/>
    <property type="match status" value="1"/>
</dbReference>
<dbReference type="PANTHER" id="PTHR12544:SF29">
    <property type="entry name" value="GLUTAMINASE"/>
    <property type="match status" value="1"/>
</dbReference>
<dbReference type="Pfam" id="PF04960">
    <property type="entry name" value="Glutaminase"/>
    <property type="match status" value="1"/>
</dbReference>
<dbReference type="SUPFAM" id="SSF56601">
    <property type="entry name" value="beta-lactamase/transpeptidase-like"/>
    <property type="match status" value="1"/>
</dbReference>
<reference key="1">
    <citation type="journal article" date="2003" name="Proc. Natl. Acad. Sci. U.S.A.">
        <title>The complete genome sequence of Chromobacterium violaceum reveals remarkable and exploitable bacterial adaptability.</title>
        <authorList>
            <person name="Vasconcelos A.T.R."/>
            <person name="de Almeida D.F."/>
            <person name="Hungria M."/>
            <person name="Guimaraes C.T."/>
            <person name="Antonio R.V."/>
            <person name="Almeida F.C."/>
            <person name="de Almeida L.G.P."/>
            <person name="de Almeida R."/>
            <person name="Alves-Gomes J.A."/>
            <person name="Andrade E.M."/>
            <person name="Araripe J."/>
            <person name="de Araujo M.F.F."/>
            <person name="Astolfi-Filho S."/>
            <person name="Azevedo V."/>
            <person name="Baptista A.J."/>
            <person name="Bataus L.A.M."/>
            <person name="Batista J.S."/>
            <person name="Belo A."/>
            <person name="van den Berg C."/>
            <person name="Bogo M."/>
            <person name="Bonatto S."/>
            <person name="Bordignon J."/>
            <person name="Brigido M.M."/>
            <person name="Brito C.A."/>
            <person name="Brocchi M."/>
            <person name="Burity H.A."/>
            <person name="Camargo A.A."/>
            <person name="Cardoso D.D.P."/>
            <person name="Carneiro N.P."/>
            <person name="Carraro D.M."/>
            <person name="Carvalho C.M.B."/>
            <person name="Cascardo J.C.M."/>
            <person name="Cavada B.S."/>
            <person name="Chueire L.M.O."/>
            <person name="Creczynski-Pasa T.B."/>
            <person name="Cunha-Junior N.C."/>
            <person name="Fagundes N."/>
            <person name="Falcao C.L."/>
            <person name="Fantinatti F."/>
            <person name="Farias I.P."/>
            <person name="Felipe M.S.S."/>
            <person name="Ferrari L.P."/>
            <person name="Ferro J.A."/>
            <person name="Ferro M.I.T."/>
            <person name="Franco G.R."/>
            <person name="Freitas N.S.A."/>
            <person name="Furlan L.R."/>
            <person name="Gazzinelli R.T."/>
            <person name="Gomes E.A."/>
            <person name="Goncalves P.R."/>
            <person name="Grangeiro T.B."/>
            <person name="Grattapaglia D."/>
            <person name="Grisard E.C."/>
            <person name="Hanna E.S."/>
            <person name="Jardim S.N."/>
            <person name="Laurino J."/>
            <person name="Leoi L.C.T."/>
            <person name="Lima L.F.A."/>
            <person name="Loureiro M.F."/>
            <person name="Lyra M.C.C.P."/>
            <person name="Madeira H.M.F."/>
            <person name="Manfio G.P."/>
            <person name="Maranhao A.Q."/>
            <person name="Martins W.S."/>
            <person name="di Mauro S.M.Z."/>
            <person name="de Medeiros S.R.B."/>
            <person name="Meissner R.V."/>
            <person name="Moreira M.A.M."/>
            <person name="Nascimento F.F."/>
            <person name="Nicolas M.F."/>
            <person name="Oliveira J.G."/>
            <person name="Oliveira S.C."/>
            <person name="Paixao R.F.C."/>
            <person name="Parente J.A."/>
            <person name="Pedrosa F.O."/>
            <person name="Pena S.D.J."/>
            <person name="Pereira J.O."/>
            <person name="Pereira M."/>
            <person name="Pinto L.S.R.C."/>
            <person name="Pinto L.S."/>
            <person name="Porto J.I.R."/>
            <person name="Potrich D.P."/>
            <person name="Ramalho-Neto C.E."/>
            <person name="Reis A.M.M."/>
            <person name="Rigo L.U."/>
            <person name="Rondinelli E."/>
            <person name="Santos E.B.P."/>
            <person name="Santos F.R."/>
            <person name="Schneider M.P.C."/>
            <person name="Seuanez H.N."/>
            <person name="Silva A.M.R."/>
            <person name="da Silva A.L.C."/>
            <person name="Silva D.W."/>
            <person name="Silva R."/>
            <person name="Simoes I.C."/>
            <person name="Simon D."/>
            <person name="Soares C.M.A."/>
            <person name="Soares R.B.A."/>
            <person name="Souza E.M."/>
            <person name="Souza K.R.L."/>
            <person name="Souza R.C."/>
            <person name="Steffens M.B.R."/>
            <person name="Steindel M."/>
            <person name="Teixeira S.R."/>
            <person name="Urmenyi T."/>
            <person name="Vettore A."/>
            <person name="Wassem R."/>
            <person name="Zaha A."/>
            <person name="Simpson A.J.G."/>
        </authorList>
    </citation>
    <scope>NUCLEOTIDE SEQUENCE [LARGE SCALE GENOMIC DNA]</scope>
    <source>
        <strain>ATCC 12472 / DSM 30191 / JCM 1249 / CCUG 213 / NBRC 12614 / NCIMB 9131 / NCTC 9757 / MK</strain>
    </source>
</reference>